<reference key="1">
    <citation type="submission" date="2006-12" db="EMBL/GenBank/DDBJ databases">
        <title>Complete sequence of Acidovorax avenae subsp. citrulli AAC00-1.</title>
        <authorList>
            <person name="Copeland A."/>
            <person name="Lucas S."/>
            <person name="Lapidus A."/>
            <person name="Barry K."/>
            <person name="Detter J.C."/>
            <person name="Glavina del Rio T."/>
            <person name="Dalin E."/>
            <person name="Tice H."/>
            <person name="Pitluck S."/>
            <person name="Kiss H."/>
            <person name="Brettin T."/>
            <person name="Bruce D."/>
            <person name="Han C."/>
            <person name="Tapia R."/>
            <person name="Gilna P."/>
            <person name="Schmutz J."/>
            <person name="Larimer F."/>
            <person name="Land M."/>
            <person name="Hauser L."/>
            <person name="Kyrpides N."/>
            <person name="Kim E."/>
            <person name="Stahl D."/>
            <person name="Richardson P."/>
        </authorList>
    </citation>
    <scope>NUCLEOTIDE SEQUENCE [LARGE SCALE GENOMIC DNA]</scope>
    <source>
        <strain>AAC00-1</strain>
    </source>
</reference>
<dbReference type="EMBL" id="CP000512">
    <property type="protein sequence ID" value="ABM31216.1"/>
    <property type="molecule type" value="Genomic_DNA"/>
</dbReference>
<dbReference type="RefSeq" id="WP_011793787.1">
    <property type="nucleotide sequence ID" value="NC_008752.1"/>
</dbReference>
<dbReference type="SMR" id="A1TJS8"/>
<dbReference type="STRING" id="397945.Aave_0612"/>
<dbReference type="GeneID" id="79790326"/>
<dbReference type="KEGG" id="aav:Aave_0612"/>
<dbReference type="eggNOG" id="COG0198">
    <property type="taxonomic scope" value="Bacteria"/>
</dbReference>
<dbReference type="HOGENOM" id="CLU_093315_2_2_4"/>
<dbReference type="OrthoDB" id="9807419at2"/>
<dbReference type="Proteomes" id="UP000002596">
    <property type="component" value="Chromosome"/>
</dbReference>
<dbReference type="GO" id="GO:1990904">
    <property type="term" value="C:ribonucleoprotein complex"/>
    <property type="evidence" value="ECO:0007669"/>
    <property type="project" value="UniProtKB-KW"/>
</dbReference>
<dbReference type="GO" id="GO:0005840">
    <property type="term" value="C:ribosome"/>
    <property type="evidence" value="ECO:0007669"/>
    <property type="project" value="UniProtKB-KW"/>
</dbReference>
<dbReference type="GO" id="GO:0019843">
    <property type="term" value="F:rRNA binding"/>
    <property type="evidence" value="ECO:0007669"/>
    <property type="project" value="UniProtKB-UniRule"/>
</dbReference>
<dbReference type="GO" id="GO:0003735">
    <property type="term" value="F:structural constituent of ribosome"/>
    <property type="evidence" value="ECO:0007669"/>
    <property type="project" value="InterPro"/>
</dbReference>
<dbReference type="GO" id="GO:0006412">
    <property type="term" value="P:translation"/>
    <property type="evidence" value="ECO:0007669"/>
    <property type="project" value="UniProtKB-UniRule"/>
</dbReference>
<dbReference type="CDD" id="cd06089">
    <property type="entry name" value="KOW_RPL26"/>
    <property type="match status" value="1"/>
</dbReference>
<dbReference type="FunFam" id="2.30.30.30:FF:000004">
    <property type="entry name" value="50S ribosomal protein L24"/>
    <property type="match status" value="1"/>
</dbReference>
<dbReference type="Gene3D" id="2.30.30.30">
    <property type="match status" value="1"/>
</dbReference>
<dbReference type="HAMAP" id="MF_01326_B">
    <property type="entry name" value="Ribosomal_uL24_B"/>
    <property type="match status" value="1"/>
</dbReference>
<dbReference type="InterPro" id="IPR005824">
    <property type="entry name" value="KOW"/>
</dbReference>
<dbReference type="InterPro" id="IPR014722">
    <property type="entry name" value="Rib_uL2_dom2"/>
</dbReference>
<dbReference type="InterPro" id="IPR003256">
    <property type="entry name" value="Ribosomal_uL24"/>
</dbReference>
<dbReference type="InterPro" id="IPR005825">
    <property type="entry name" value="Ribosomal_uL24_CS"/>
</dbReference>
<dbReference type="InterPro" id="IPR041988">
    <property type="entry name" value="Ribosomal_uL24_KOW"/>
</dbReference>
<dbReference type="InterPro" id="IPR008991">
    <property type="entry name" value="Translation_prot_SH3-like_sf"/>
</dbReference>
<dbReference type="NCBIfam" id="TIGR01079">
    <property type="entry name" value="rplX_bact"/>
    <property type="match status" value="1"/>
</dbReference>
<dbReference type="PANTHER" id="PTHR12903">
    <property type="entry name" value="MITOCHONDRIAL RIBOSOMAL PROTEIN L24"/>
    <property type="match status" value="1"/>
</dbReference>
<dbReference type="Pfam" id="PF00467">
    <property type="entry name" value="KOW"/>
    <property type="match status" value="1"/>
</dbReference>
<dbReference type="Pfam" id="PF17136">
    <property type="entry name" value="ribosomal_L24"/>
    <property type="match status" value="1"/>
</dbReference>
<dbReference type="SMART" id="SM00739">
    <property type="entry name" value="KOW"/>
    <property type="match status" value="1"/>
</dbReference>
<dbReference type="SUPFAM" id="SSF50104">
    <property type="entry name" value="Translation proteins SH3-like domain"/>
    <property type="match status" value="1"/>
</dbReference>
<dbReference type="PROSITE" id="PS01108">
    <property type="entry name" value="RIBOSOMAL_L24"/>
    <property type="match status" value="1"/>
</dbReference>
<name>RL24_PARC0</name>
<evidence type="ECO:0000255" key="1">
    <source>
        <dbReference type="HAMAP-Rule" id="MF_01326"/>
    </source>
</evidence>
<evidence type="ECO:0000305" key="2"/>
<gene>
    <name evidence="1" type="primary">rplX</name>
    <name type="ordered locus">Aave_0612</name>
</gene>
<feature type="chain" id="PRO_1000052171" description="Large ribosomal subunit protein uL24">
    <location>
        <begin position="1"/>
        <end position="106"/>
    </location>
</feature>
<accession>A1TJS8</accession>
<organism>
    <name type="scientific">Paracidovorax citrulli (strain AAC00-1)</name>
    <name type="common">Acidovorax citrulli</name>
    <dbReference type="NCBI Taxonomy" id="397945"/>
    <lineage>
        <taxon>Bacteria</taxon>
        <taxon>Pseudomonadati</taxon>
        <taxon>Pseudomonadota</taxon>
        <taxon>Betaproteobacteria</taxon>
        <taxon>Burkholderiales</taxon>
        <taxon>Comamonadaceae</taxon>
        <taxon>Paracidovorax</taxon>
    </lineage>
</organism>
<proteinExistence type="inferred from homology"/>
<sequence length="106" mass="11355">MNKIRKGDEVIVLTGRDKGKRGTVSLRKDDSYLVIDGINLVKKHVKPNPMKGTTGGIVEKAMPIHQSNVAIFNAATGKADRVGIKVQADGSRVRVFKSSGAEIKAA</sequence>
<keyword id="KW-0687">Ribonucleoprotein</keyword>
<keyword id="KW-0689">Ribosomal protein</keyword>
<keyword id="KW-0694">RNA-binding</keyword>
<keyword id="KW-0699">rRNA-binding</keyword>
<comment type="function">
    <text evidence="1">One of two assembly initiator proteins, it binds directly to the 5'-end of the 23S rRNA, where it nucleates assembly of the 50S subunit.</text>
</comment>
<comment type="function">
    <text evidence="1">One of the proteins that surrounds the polypeptide exit tunnel on the outside of the subunit.</text>
</comment>
<comment type="subunit">
    <text evidence="1">Part of the 50S ribosomal subunit.</text>
</comment>
<comment type="similarity">
    <text evidence="1">Belongs to the universal ribosomal protein uL24 family.</text>
</comment>
<protein>
    <recommendedName>
        <fullName evidence="1">Large ribosomal subunit protein uL24</fullName>
    </recommendedName>
    <alternativeName>
        <fullName evidence="2">50S ribosomal protein L24</fullName>
    </alternativeName>
</protein>